<proteinExistence type="evidence at protein level"/>
<keyword id="KW-0175">Coiled coil</keyword>
<keyword id="KW-0539">Nucleus</keyword>
<keyword id="KW-1185">Reference proteome</keyword>
<keyword id="KW-0804">Transcription</keyword>
<keyword id="KW-0805">Transcription regulation</keyword>
<gene>
    <name type="primary">IOC2</name>
    <name type="ordered locus">YLR095C</name>
</gene>
<accession>Q12072</accession>
<accession>D6VY95</accession>
<sequence>MRTKRTRGTRNVGASMPAGAANADSEDWKEYVSEDIIAQLNKHQLPYSEILDEKIADLANHWHFQYVMAWLSNVCESYTTTTFNTDQYGGSSTKCLWKNIKFDEGVFVTDVFSKIDGKDSNYYNDEVDVDEGSQNLYDRIRLQLLHQLAGNKSGQLKDWNVIVNHHLQNSSAYSDLVTDLPFLELEIARQFDIIYSIIKLIEMKNMIFKNYLANNLHLFTFSEVILDDDNSGGEEMKSLFALPNVGVLVKKTIHRVKEGSSSQVSQTLNIPIKLQNCTIKESDPDIPDSVELIHLEYSHDIDAYLQSITIDYDVITTNWGSMLEYWSENKSSKAIDEFITNLIPVYAEHRLYSAKLLANREKERAIAELMTRRKRSSRLVAKEEENKKKDLESEWFEKLDEREQFIRHRNKLVSKEIKKIKDLLWNQLWQLYDQDYRDEKLTRRNELKDRSGSGTPFFETSLGREEDNPLNEIDIGVLDHGPNFQSSIIPVEPPIPGTVGPLQTGDVPELPSDFCITKEELDELANYGIFTPQQEPDNQDSVFQCPGEPELAPMIITEDTETDLFNNRPLICCDHCYRWQHWECQPPKIIELISSTTKSPQHTLSQRDFGVIIMGNSHGNRRSSRRPQSTLEPSTKSSRPTDKRKPLSECSTFICAWCIRDLELELRNIFVPELKIIRAKQRKQQEDRERRKKMKEEKKRLEELAKKRELTESVSPPVFNNAFANMSSSTTPSIAAYEKTNPAINPAPNVNAAHPIITYSQQTGSKTVPQAPQAPQTSQASIQPQQQQQQQQQQQPLHPKEQNFHFQFPPTN</sequence>
<evidence type="ECO:0000255" key="1"/>
<evidence type="ECO:0000256" key="2">
    <source>
        <dbReference type="SAM" id="MobiDB-lite"/>
    </source>
</evidence>
<evidence type="ECO:0000269" key="3">
    <source>
    </source>
</evidence>
<evidence type="ECO:0000269" key="4">
    <source>
    </source>
</evidence>
<evidence type="ECO:0000269" key="5">
    <source>
    </source>
</evidence>
<evidence type="ECO:0000269" key="6">
    <source>
    </source>
</evidence>
<feature type="chain" id="PRO_0000240452" description="ISWI one complex protein 2">
    <location>
        <begin position="1"/>
        <end position="812"/>
    </location>
</feature>
<feature type="region of interest" description="Disordered" evidence="2">
    <location>
        <begin position="1"/>
        <end position="21"/>
    </location>
</feature>
<feature type="region of interest" description="Disordered" evidence="2">
    <location>
        <begin position="614"/>
        <end position="646"/>
    </location>
</feature>
<feature type="region of interest" description="Disordered" evidence="2">
    <location>
        <begin position="679"/>
        <end position="704"/>
    </location>
</feature>
<feature type="region of interest" description="Disordered" evidence="2">
    <location>
        <begin position="762"/>
        <end position="812"/>
    </location>
</feature>
<feature type="coiled-coil region" evidence="1">
    <location>
        <begin position="673"/>
        <end position="714"/>
    </location>
</feature>
<feature type="compositionally biased region" description="Polar residues" evidence="2">
    <location>
        <begin position="627"/>
        <end position="638"/>
    </location>
</feature>
<feature type="compositionally biased region" description="Basic and acidic residues" evidence="2">
    <location>
        <begin position="683"/>
        <end position="704"/>
    </location>
</feature>
<feature type="compositionally biased region" description="Low complexity" evidence="2">
    <location>
        <begin position="769"/>
        <end position="796"/>
    </location>
</feature>
<organism>
    <name type="scientific">Saccharomyces cerevisiae (strain ATCC 204508 / S288c)</name>
    <name type="common">Baker's yeast</name>
    <dbReference type="NCBI Taxonomy" id="559292"/>
    <lineage>
        <taxon>Eukaryota</taxon>
        <taxon>Fungi</taxon>
        <taxon>Dikarya</taxon>
        <taxon>Ascomycota</taxon>
        <taxon>Saccharomycotina</taxon>
        <taxon>Saccharomycetes</taxon>
        <taxon>Saccharomycetales</taxon>
        <taxon>Saccharomycetaceae</taxon>
        <taxon>Saccharomyces</taxon>
    </lineage>
</organism>
<dbReference type="EMBL" id="Z73267">
    <property type="protein sequence ID" value="CAA97657.1"/>
    <property type="molecule type" value="Genomic_DNA"/>
</dbReference>
<dbReference type="EMBL" id="U53876">
    <property type="protein sequence ID" value="AAB67539.1"/>
    <property type="molecule type" value="Genomic_DNA"/>
</dbReference>
<dbReference type="EMBL" id="BK006945">
    <property type="protein sequence ID" value="DAA09411.1"/>
    <property type="molecule type" value="Genomic_DNA"/>
</dbReference>
<dbReference type="PIR" id="S64929">
    <property type="entry name" value="S64929"/>
</dbReference>
<dbReference type="RefSeq" id="NP_013196.1">
    <property type="nucleotide sequence ID" value="NM_001181982.1"/>
</dbReference>
<dbReference type="SMR" id="Q12072"/>
<dbReference type="BioGRID" id="31368">
    <property type="interactions" value="147"/>
</dbReference>
<dbReference type="ComplexPortal" id="CPX-636">
    <property type="entry name" value="ISW1b chromatin remodeling complex"/>
</dbReference>
<dbReference type="DIP" id="DIP-5201N"/>
<dbReference type="FunCoup" id="Q12072">
    <property type="interactions" value="254"/>
</dbReference>
<dbReference type="IntAct" id="Q12072">
    <property type="interactions" value="43"/>
</dbReference>
<dbReference type="MINT" id="Q12072"/>
<dbReference type="STRING" id="4932.YLR095C"/>
<dbReference type="iPTMnet" id="Q12072"/>
<dbReference type="PaxDb" id="4932-YLR095C"/>
<dbReference type="PeptideAtlas" id="Q12072"/>
<dbReference type="EnsemblFungi" id="YLR095C_mRNA">
    <property type="protein sequence ID" value="YLR095C"/>
    <property type="gene ID" value="YLR095C"/>
</dbReference>
<dbReference type="GeneID" id="850784"/>
<dbReference type="KEGG" id="sce:YLR095C"/>
<dbReference type="AGR" id="SGD:S000004085"/>
<dbReference type="SGD" id="S000004085">
    <property type="gene designation" value="IOC2"/>
</dbReference>
<dbReference type="VEuPathDB" id="FungiDB:YLR095C"/>
<dbReference type="eggNOG" id="ENOG502QPXN">
    <property type="taxonomic scope" value="Eukaryota"/>
</dbReference>
<dbReference type="HOGENOM" id="CLU_016629_0_0_1"/>
<dbReference type="InParanoid" id="Q12072"/>
<dbReference type="OMA" id="WQHWECQ"/>
<dbReference type="OrthoDB" id="303107at2759"/>
<dbReference type="BioCyc" id="YEAST:G3O-32245-MONOMER"/>
<dbReference type="BioGRID-ORCS" id="850784">
    <property type="hits" value="0 hits in 10 CRISPR screens"/>
</dbReference>
<dbReference type="PRO" id="PR:Q12072"/>
<dbReference type="Proteomes" id="UP000002311">
    <property type="component" value="Chromosome XII"/>
</dbReference>
<dbReference type="RNAct" id="Q12072">
    <property type="molecule type" value="protein"/>
</dbReference>
<dbReference type="GO" id="GO:0016587">
    <property type="term" value="C:Isw1 complex"/>
    <property type="evidence" value="ECO:0000353"/>
    <property type="project" value="ComplexPortal"/>
</dbReference>
<dbReference type="GO" id="GO:0036437">
    <property type="term" value="C:Isw1b complex"/>
    <property type="evidence" value="ECO:0000314"/>
    <property type="project" value="SGD"/>
</dbReference>
<dbReference type="GO" id="GO:0006338">
    <property type="term" value="P:chromatin remodeling"/>
    <property type="evidence" value="ECO:0000314"/>
    <property type="project" value="ComplexPortal"/>
</dbReference>
<dbReference type="GO" id="GO:0006355">
    <property type="term" value="P:regulation of DNA-templated transcription"/>
    <property type="evidence" value="ECO:0000303"/>
    <property type="project" value="ComplexPortal"/>
</dbReference>
<dbReference type="GO" id="GO:0009408">
    <property type="term" value="P:response to heat"/>
    <property type="evidence" value="ECO:0000303"/>
    <property type="project" value="ComplexPortal"/>
</dbReference>
<dbReference type="InterPro" id="IPR011011">
    <property type="entry name" value="Znf_FYVE_PHD"/>
</dbReference>
<dbReference type="SUPFAM" id="SSF57903">
    <property type="entry name" value="FYVE/PHD zinc finger"/>
    <property type="match status" value="1"/>
</dbReference>
<name>IOC2_YEAST</name>
<comment type="function">
    <text evidence="3 6">Functions as a component of the ISW1B complex, which acts in remodeling the chromatin by catalyzing an ATP-dependent alteration in the structure of nucleosomal DNA. The ISW1B complex acts within coding regions to control the amount of RNA polymerase II released into productive elongation and to coordinate elongation with termination and pre-mRNA processing.</text>
</comment>
<comment type="subunit">
    <text evidence="3">Component of the ISW1B complex, which at least consists of ISW1, IOC2 and IOC4.</text>
</comment>
<comment type="interaction">
    <interactant intactId="EBI-30191">
        <id>Q12072</id>
    </interactant>
    <interactant intactId="EBI-21087">
        <id>P38144</id>
        <label>ISW1</label>
    </interactant>
    <organismsDiffer>false</organismsDiffer>
    <experiments>7</experiments>
</comment>
<comment type="subcellular location">
    <subcellularLocation>
        <location evidence="4">Nucleus</location>
    </subcellularLocation>
</comment>
<comment type="miscellaneous">
    <text evidence="5">Present with 7520 molecules/cell in log phase SD medium.</text>
</comment>
<reference key="1">
    <citation type="journal article" date="1997" name="Nature">
        <title>The nucleotide sequence of Saccharomyces cerevisiae chromosome XII.</title>
        <authorList>
            <person name="Johnston M."/>
            <person name="Hillier L.W."/>
            <person name="Riles L."/>
            <person name="Albermann K."/>
            <person name="Andre B."/>
            <person name="Ansorge W."/>
            <person name="Benes V."/>
            <person name="Brueckner M."/>
            <person name="Delius H."/>
            <person name="Dubois E."/>
            <person name="Duesterhoeft A."/>
            <person name="Entian K.-D."/>
            <person name="Floeth M."/>
            <person name="Goffeau A."/>
            <person name="Hebling U."/>
            <person name="Heumann K."/>
            <person name="Heuss-Neitzel D."/>
            <person name="Hilbert H."/>
            <person name="Hilger F."/>
            <person name="Kleine K."/>
            <person name="Koetter P."/>
            <person name="Louis E.J."/>
            <person name="Messenguy F."/>
            <person name="Mewes H.-W."/>
            <person name="Miosga T."/>
            <person name="Moestl D."/>
            <person name="Mueller-Auer S."/>
            <person name="Nentwich U."/>
            <person name="Obermaier B."/>
            <person name="Piravandi E."/>
            <person name="Pohl T.M."/>
            <person name="Portetelle D."/>
            <person name="Purnelle B."/>
            <person name="Rechmann S."/>
            <person name="Rieger M."/>
            <person name="Rinke M."/>
            <person name="Rose M."/>
            <person name="Scharfe M."/>
            <person name="Scherens B."/>
            <person name="Scholler P."/>
            <person name="Schwager C."/>
            <person name="Schwarz S."/>
            <person name="Underwood A.P."/>
            <person name="Urrestarazu L.A."/>
            <person name="Vandenbol M."/>
            <person name="Verhasselt P."/>
            <person name="Vierendeels F."/>
            <person name="Voet M."/>
            <person name="Volckaert G."/>
            <person name="Voss H."/>
            <person name="Wambutt R."/>
            <person name="Wedler E."/>
            <person name="Wedler H."/>
            <person name="Zimmermann F.K."/>
            <person name="Zollner A."/>
            <person name="Hani J."/>
            <person name="Hoheisel J.D."/>
        </authorList>
    </citation>
    <scope>NUCLEOTIDE SEQUENCE [LARGE SCALE GENOMIC DNA]</scope>
    <source>
        <strain>ATCC 204508 / S288c</strain>
    </source>
</reference>
<reference key="2">
    <citation type="journal article" date="2014" name="G3 (Bethesda)">
        <title>The reference genome sequence of Saccharomyces cerevisiae: Then and now.</title>
        <authorList>
            <person name="Engel S.R."/>
            <person name="Dietrich F.S."/>
            <person name="Fisk D.G."/>
            <person name="Binkley G."/>
            <person name="Balakrishnan R."/>
            <person name="Costanzo M.C."/>
            <person name="Dwight S.S."/>
            <person name="Hitz B.C."/>
            <person name="Karra K."/>
            <person name="Nash R.S."/>
            <person name="Weng S."/>
            <person name="Wong E.D."/>
            <person name="Lloyd P."/>
            <person name="Skrzypek M.S."/>
            <person name="Miyasato S.R."/>
            <person name="Simison M."/>
            <person name="Cherry J.M."/>
        </authorList>
    </citation>
    <scope>GENOME REANNOTATION</scope>
    <source>
        <strain>ATCC 204508 / S288c</strain>
    </source>
</reference>
<reference key="3">
    <citation type="journal article" date="2003" name="Cell">
        <title>Isw1 chromatin remodeling ATPase coordinates transcription elongation and termination by RNA polymerase II.</title>
        <authorList>
            <person name="Morillon A."/>
            <person name="Karabetsou N."/>
            <person name="O'Sullivan J."/>
            <person name="Kent N."/>
            <person name="Proudfoot N."/>
            <person name="Mellor J."/>
        </authorList>
    </citation>
    <scope>FUNCTION OF THE ISW1B COMPLEX</scope>
</reference>
<reference key="4">
    <citation type="journal article" date="2003" name="Nature">
        <title>Global analysis of protein localization in budding yeast.</title>
        <authorList>
            <person name="Huh W.-K."/>
            <person name="Falvo J.V."/>
            <person name="Gerke L.C."/>
            <person name="Carroll A.S."/>
            <person name="Howson R.W."/>
            <person name="Weissman J.S."/>
            <person name="O'Shea E.K."/>
        </authorList>
    </citation>
    <scope>SUBCELLULAR LOCATION [LARGE SCALE ANALYSIS]</scope>
</reference>
<reference key="5">
    <citation type="journal article" date="2003" name="Nature">
        <title>Global analysis of protein expression in yeast.</title>
        <authorList>
            <person name="Ghaemmaghami S."/>
            <person name="Huh W.-K."/>
            <person name="Bower K."/>
            <person name="Howson R.W."/>
            <person name="Belle A."/>
            <person name="Dephoure N."/>
            <person name="O'Shea E.K."/>
            <person name="Weissman J.S."/>
        </authorList>
    </citation>
    <scope>LEVEL OF PROTEIN EXPRESSION [LARGE SCALE ANALYSIS]</scope>
</reference>
<reference key="6">
    <citation type="journal article" date="2003" name="Mol. Cell. Biol.">
        <title>Yeast Isw1p forms two separable complexes in vivo.</title>
        <authorList>
            <person name="Vary J.C. Jr."/>
            <person name="Gangaraju V.K."/>
            <person name="Qin J."/>
            <person name="Landel C.C."/>
            <person name="Kooperberg C."/>
            <person name="Bartholomew B."/>
            <person name="Tsukiyama T."/>
        </authorList>
    </citation>
    <scope>IDENTIFICATION IN THE ISW1B COMPLEX</scope>
    <scope>FUNCTION OF THE ISW1B COMPLEX</scope>
</reference>
<reference key="7">
    <citation type="journal article" date="2008" name="Mol. Cell. Proteomics">
        <title>A multidimensional chromatography technology for in-depth phosphoproteome analysis.</title>
        <authorList>
            <person name="Albuquerque C.P."/>
            <person name="Smolka M.B."/>
            <person name="Payne S.H."/>
            <person name="Bafna V."/>
            <person name="Eng J."/>
            <person name="Zhou H."/>
        </authorList>
    </citation>
    <scope>IDENTIFICATION BY MASS SPECTROMETRY [LARGE SCALE ANALYSIS]</scope>
</reference>
<reference key="8">
    <citation type="journal article" date="2009" name="Science">
        <title>Global analysis of Cdk1 substrate phosphorylation sites provides insights into evolution.</title>
        <authorList>
            <person name="Holt L.J."/>
            <person name="Tuch B.B."/>
            <person name="Villen J."/>
            <person name="Johnson A.D."/>
            <person name="Gygi S.P."/>
            <person name="Morgan D.O."/>
        </authorList>
    </citation>
    <scope>IDENTIFICATION BY MASS SPECTROMETRY [LARGE SCALE ANALYSIS]</scope>
</reference>
<protein>
    <recommendedName>
        <fullName>ISWI one complex protein 2</fullName>
    </recommendedName>
</protein>